<evidence type="ECO:0000255" key="1"/>
<evidence type="ECO:0000256" key="2">
    <source>
        <dbReference type="SAM" id="MobiDB-lite"/>
    </source>
</evidence>
<evidence type="ECO:0000269" key="3">
    <source>
    </source>
</evidence>
<evidence type="ECO:0000303" key="4">
    <source>
    </source>
</evidence>
<evidence type="ECO:0000305" key="5"/>
<evidence type="ECO:0000312" key="6">
    <source>
        <dbReference type="EMBL" id="CCD68888.1"/>
    </source>
</evidence>
<dbReference type="EMBL" id="FO081061">
    <property type="protein sequence ID" value="CCD68888.1"/>
    <property type="molecule type" value="Genomic_DNA"/>
</dbReference>
<dbReference type="PIR" id="C88950">
    <property type="entry name" value="C88950"/>
</dbReference>
<dbReference type="RefSeq" id="NP_503413.2">
    <property type="nucleotide sequence ID" value="NM_071012.5"/>
</dbReference>
<dbReference type="SMR" id="O44616"/>
<dbReference type="FunCoup" id="O44616">
    <property type="interactions" value="442"/>
</dbReference>
<dbReference type="STRING" id="6239.R09B5.11.1"/>
<dbReference type="PaxDb" id="6239-R09B5.11"/>
<dbReference type="EnsemblMetazoa" id="R09B5.11.1">
    <property type="protein sequence ID" value="R09B5.11.1"/>
    <property type="gene ID" value="WBGene00019979"/>
</dbReference>
<dbReference type="GeneID" id="178634"/>
<dbReference type="KEGG" id="cel:CELE_R09B5.11"/>
<dbReference type="UCSC" id="R09B5.11">
    <property type="organism name" value="c. elegans"/>
</dbReference>
<dbReference type="AGR" id="WB:WBGene00019979"/>
<dbReference type="CTD" id="178634"/>
<dbReference type="WormBase" id="R09B5.11">
    <property type="protein sequence ID" value="CE30296"/>
    <property type="gene ID" value="WBGene00019979"/>
</dbReference>
<dbReference type="eggNOG" id="KOG0569">
    <property type="taxonomic scope" value="Eukaryota"/>
</dbReference>
<dbReference type="HOGENOM" id="CLU_001265_30_5_1"/>
<dbReference type="InParanoid" id="O44616"/>
<dbReference type="OMA" id="GWLIMFQ"/>
<dbReference type="OrthoDB" id="4540492at2759"/>
<dbReference type="PhylomeDB" id="O44616"/>
<dbReference type="Reactome" id="R-CEL-189200">
    <property type="pathway name" value="Cellular hexose transport"/>
</dbReference>
<dbReference type="Reactome" id="R-CEL-196836">
    <property type="pathway name" value="Vitamin C (ascorbate) metabolism"/>
</dbReference>
<dbReference type="Reactome" id="R-CEL-422356">
    <property type="pathway name" value="Regulation of insulin secretion"/>
</dbReference>
<dbReference type="Reactome" id="R-CEL-5653890">
    <property type="pathway name" value="Lactose synthesis"/>
</dbReference>
<dbReference type="Reactome" id="R-CEL-6798695">
    <property type="pathway name" value="Neutrophil degranulation"/>
</dbReference>
<dbReference type="Reactome" id="R-CEL-8981373">
    <property type="pathway name" value="Intestinal hexose absorption"/>
</dbReference>
<dbReference type="PRO" id="PR:O44616"/>
<dbReference type="Proteomes" id="UP000001940">
    <property type="component" value="Chromosome V"/>
</dbReference>
<dbReference type="Bgee" id="WBGene00019979">
    <property type="expression patterns" value="Expressed in adult organism and 2 other cell types or tissues"/>
</dbReference>
<dbReference type="GO" id="GO:0016020">
    <property type="term" value="C:membrane"/>
    <property type="evidence" value="ECO:0000318"/>
    <property type="project" value="GO_Central"/>
</dbReference>
<dbReference type="GO" id="GO:0005886">
    <property type="term" value="C:plasma membrane"/>
    <property type="evidence" value="ECO:0007669"/>
    <property type="project" value="UniProtKB-SubCell"/>
</dbReference>
<dbReference type="GO" id="GO:0015149">
    <property type="term" value="F:hexose transmembrane transporter activity"/>
    <property type="evidence" value="ECO:0000318"/>
    <property type="project" value="GO_Central"/>
</dbReference>
<dbReference type="GO" id="GO:0015749">
    <property type="term" value="P:monosaccharide transmembrane transport"/>
    <property type="evidence" value="ECO:0000318"/>
    <property type="project" value="GO_Central"/>
</dbReference>
<dbReference type="CDD" id="cd17431">
    <property type="entry name" value="MFS_GLUT_Class1"/>
    <property type="match status" value="1"/>
</dbReference>
<dbReference type="FunFam" id="1.20.1250.20:FF:001511">
    <property type="entry name" value="Solute carrier family 2, facilitated glucose transporter member 5"/>
    <property type="match status" value="1"/>
</dbReference>
<dbReference type="Gene3D" id="1.20.1250.20">
    <property type="entry name" value="MFS general substrate transporter like domains"/>
    <property type="match status" value="1"/>
</dbReference>
<dbReference type="InterPro" id="IPR045263">
    <property type="entry name" value="GLUT"/>
</dbReference>
<dbReference type="InterPro" id="IPR020846">
    <property type="entry name" value="MFS_dom"/>
</dbReference>
<dbReference type="InterPro" id="IPR005828">
    <property type="entry name" value="MFS_sugar_transport-like"/>
</dbReference>
<dbReference type="InterPro" id="IPR036259">
    <property type="entry name" value="MFS_trans_sf"/>
</dbReference>
<dbReference type="InterPro" id="IPR003663">
    <property type="entry name" value="Sugar/inositol_transpt"/>
</dbReference>
<dbReference type="InterPro" id="IPR005829">
    <property type="entry name" value="Sugar_transporter_CS"/>
</dbReference>
<dbReference type="NCBIfam" id="TIGR00879">
    <property type="entry name" value="SP"/>
    <property type="match status" value="1"/>
</dbReference>
<dbReference type="PANTHER" id="PTHR23503:SF42">
    <property type="entry name" value="FACILITATED GLUCOSE TRANSPORTER HOMOLOG"/>
    <property type="match status" value="1"/>
</dbReference>
<dbReference type="PANTHER" id="PTHR23503">
    <property type="entry name" value="SOLUTE CARRIER FAMILY 2"/>
    <property type="match status" value="1"/>
</dbReference>
<dbReference type="Pfam" id="PF00083">
    <property type="entry name" value="Sugar_tr"/>
    <property type="match status" value="1"/>
</dbReference>
<dbReference type="PRINTS" id="PR00171">
    <property type="entry name" value="SUGRTRNSPORT"/>
</dbReference>
<dbReference type="SUPFAM" id="SSF103473">
    <property type="entry name" value="MFS general substrate transporter"/>
    <property type="match status" value="1"/>
</dbReference>
<dbReference type="PROSITE" id="PS50850">
    <property type="entry name" value="MFS"/>
    <property type="match status" value="1"/>
</dbReference>
<dbReference type="PROSITE" id="PS00217">
    <property type="entry name" value="SUGAR_TRANSPORT_2"/>
    <property type="match status" value="1"/>
</dbReference>
<keyword id="KW-1003">Cell membrane</keyword>
<keyword id="KW-0472">Membrane</keyword>
<keyword id="KW-1185">Reference proteome</keyword>
<keyword id="KW-0812">Transmembrane</keyword>
<keyword id="KW-1133">Transmembrane helix</keyword>
<keyword id="KW-0813">Transport</keyword>
<accession>O44616</accession>
<reference evidence="6" key="1">
    <citation type="journal article" date="1998" name="Science">
        <title>Genome sequence of the nematode C. elegans: a platform for investigating biology.</title>
        <authorList>
            <consortium name="The C. elegans sequencing consortium"/>
        </authorList>
    </citation>
    <scope>NUCLEOTIDE SEQUENCE [LARGE SCALE GENOMIC DNA]</scope>
    <source>
        <strain evidence="6">Bristol N2</strain>
    </source>
</reference>
<reference evidence="5" key="2">
    <citation type="journal article" date="2013" name="PLoS ONE">
        <title>FGT-1 is a mammalian GLUT2-like facilitative glucose transporter in Caenorhabditis elegans whose malfunction induces fat accumulation in intestinal cells.</title>
        <authorList>
            <person name="Kitaoka S."/>
            <person name="Morielli A.D."/>
            <person name="Zhao F.Q."/>
        </authorList>
    </citation>
    <scope>FUNCTION</scope>
    <scope>ABSENCE OF GLUCOSE TRANSPORTER ACTIVITY</scope>
    <scope>SUBCELLULAR LOCATION</scope>
    <scope>TISSUE SPECIFICITY</scope>
    <source>
        <strain evidence="3">Bristol N2</strain>
    </source>
</reference>
<protein>
    <recommendedName>
        <fullName evidence="4">Facilitated glucose transporter homolog</fullName>
    </recommendedName>
</protein>
<feature type="chain" id="PRO_0000425147" description="Facilitated glucose transporter homolog">
    <location>
        <begin position="1"/>
        <end position="516"/>
    </location>
</feature>
<feature type="topological domain" description="Cytoplasmic" evidence="1">
    <location>
        <begin position="1"/>
        <end position="47"/>
    </location>
</feature>
<feature type="transmembrane region" description="Helical; Name=1" evidence="1">
    <location>
        <begin position="48"/>
        <end position="68"/>
    </location>
</feature>
<feature type="topological domain" description="Extracellular" evidence="1">
    <location>
        <begin position="69"/>
        <end position="101"/>
    </location>
</feature>
<feature type="transmembrane region" description="Helical; Name=2" evidence="1">
    <location>
        <begin position="102"/>
        <end position="122"/>
    </location>
</feature>
<feature type="topological domain" description="Cytoplasmic" evidence="1">
    <location>
        <begin position="123"/>
        <end position="138"/>
    </location>
</feature>
<feature type="transmembrane region" description="Helical; Name=3" evidence="1">
    <location>
        <begin position="139"/>
        <end position="159"/>
    </location>
</feature>
<feature type="topological domain" description="Extracellular" evidence="1">
    <location>
        <begin position="160"/>
        <end position="161"/>
    </location>
</feature>
<feature type="transmembrane region" description="Helical; Name=4" evidence="1">
    <location>
        <begin position="162"/>
        <end position="182"/>
    </location>
</feature>
<feature type="topological domain" description="Cytoplasmic" evidence="1">
    <location>
        <begin position="183"/>
        <end position="200"/>
    </location>
</feature>
<feature type="transmembrane region" description="Helical; Name=5" evidence="1">
    <location>
        <begin position="201"/>
        <end position="221"/>
    </location>
</feature>
<feature type="topological domain" description="Extracellular" evidence="1">
    <location>
        <position position="222"/>
    </location>
</feature>
<feature type="transmembrane region" description="Helical; Name=6" evidence="1">
    <location>
        <begin position="223"/>
        <end position="243"/>
    </location>
</feature>
<feature type="topological domain" description="Cytoplasmic" evidence="1">
    <location>
        <begin position="244"/>
        <end position="306"/>
    </location>
</feature>
<feature type="transmembrane region" description="Helical; Name=7" evidence="1">
    <location>
        <begin position="307"/>
        <end position="327"/>
    </location>
</feature>
<feature type="topological domain" description="Extracellular" evidence="1">
    <location>
        <begin position="328"/>
        <end position="344"/>
    </location>
</feature>
<feature type="transmembrane region" description="Helical; Name=8" evidence="1">
    <location>
        <begin position="345"/>
        <end position="365"/>
    </location>
</feature>
<feature type="topological domain" description="Cytoplasmic" evidence="1">
    <location>
        <begin position="366"/>
        <end position="376"/>
    </location>
</feature>
<feature type="transmembrane region" description="Helical; Name=9" evidence="1">
    <location>
        <begin position="377"/>
        <end position="397"/>
    </location>
</feature>
<feature type="topological domain" description="Extracellular" evidence="1">
    <location>
        <begin position="398"/>
        <end position="409"/>
    </location>
</feature>
<feature type="transmembrane region" description="Helical; Name=10" evidence="1">
    <location>
        <begin position="410"/>
        <end position="430"/>
    </location>
</feature>
<feature type="topological domain" description="Cytoplasmic" evidence="1">
    <location>
        <begin position="431"/>
        <end position="444"/>
    </location>
</feature>
<feature type="transmembrane region" description="Helical; Name=11" evidence="1">
    <location>
        <begin position="445"/>
        <end position="465"/>
    </location>
</feature>
<feature type="topological domain" description="Extracellular" evidence="1">
    <location>
        <begin position="466"/>
        <end position="471"/>
    </location>
</feature>
<feature type="transmembrane region" description="Helical; Name=12" evidence="1">
    <location>
        <begin position="472"/>
        <end position="492"/>
    </location>
</feature>
<feature type="topological domain" description="Cytoplasmic" evidence="1">
    <location>
        <begin position="493"/>
        <end position="516"/>
    </location>
</feature>
<feature type="region of interest" description="Disordered" evidence="2">
    <location>
        <begin position="1"/>
        <end position="37"/>
    </location>
</feature>
<feature type="compositionally biased region" description="Low complexity" evidence="2">
    <location>
        <begin position="14"/>
        <end position="26"/>
    </location>
</feature>
<feature type="compositionally biased region" description="Basic and acidic residues" evidence="2">
    <location>
        <begin position="27"/>
        <end position="37"/>
    </location>
</feature>
<organism>
    <name type="scientific">Caenorhabditis elegans</name>
    <dbReference type="NCBI Taxonomy" id="6239"/>
    <lineage>
        <taxon>Eukaryota</taxon>
        <taxon>Metazoa</taxon>
        <taxon>Ecdysozoa</taxon>
        <taxon>Nematoda</taxon>
        <taxon>Chromadorea</taxon>
        <taxon>Rhabditida</taxon>
        <taxon>Rhabditina</taxon>
        <taxon>Rhabditomorpha</taxon>
        <taxon>Rhabditoidea</taxon>
        <taxon>Rhabditidae</taxon>
        <taxon>Peloderinae</taxon>
        <taxon>Caenorhabditis</taxon>
    </lineage>
</organism>
<comment type="function">
    <text evidence="3">Appears to have no transport activity for glucose.</text>
</comment>
<comment type="subcellular location">
    <subcellularLocation>
        <location evidence="3">Cell membrane</location>
        <topology evidence="1 3">Multi-pass membrane protein</topology>
    </subcellularLocation>
</comment>
<comment type="tissue specificity">
    <text evidence="3">Expressed in seam cells from the early embryonic stage through the L2 stage (at protein level).</text>
</comment>
<comment type="similarity">
    <text evidence="1">Belongs to the major facilitator superfamily. Sugar transporter (TC 2.A.1.1) family.</text>
</comment>
<gene>
    <name type="ORF">R09B5.11</name>
</gene>
<proteinExistence type="evidence at protein level"/>
<name>FGTH1_CAEEL</name>
<sequence>MNAVVASQNKNDRSFSNMESESSSNVEKSEKENHHQSLPDENWTPFLFFCISSIALASFQDGFQIGCINAPGPLIIDWIKKCHFELFGEVLSQYQADFIWSVAVSMFSVGGMFGSFCSGFLADKFGRKSTLLYNNILALLAAVCLSTSKLFNFYPMIVFGRFLVGLNCGITSGLVPMFLTELAPANLRGKCGSFHQLNISVAIVLSQALGLPQIFGTQVGWPYIFACVAIPTFLQLATIPFCVESPKYLISKLNDREEARRILEKLRGHTKVDEELEHMVQETMVTVEPLHQPGYVSLFKGDNQWPMIVSILMMFSQQFSGISAVTFYSTLIFKRNGLSGNEPMYATVGFGCIKLIATFGCLFLIDHPKFGRKRLHIAGLSGMCISSILIVITLTLSNAGYHWASYMNVLFILSFVVTFAFGPGPIPWFFTSELFDSATRGRAAAVSATSNWVANWMVGLTFLPINNIIHQYAFLMFTFFTFTFAIFTWKFVPETKGKSPSAIRKELAFMRKRICS</sequence>